<organism>
    <name type="scientific">Thermotoga maritima (strain ATCC 43589 / DSM 3109 / JCM 10099 / NBRC 100826 / MSB8)</name>
    <dbReference type="NCBI Taxonomy" id="243274"/>
    <lineage>
        <taxon>Bacteria</taxon>
        <taxon>Thermotogati</taxon>
        <taxon>Thermotogota</taxon>
        <taxon>Thermotogae</taxon>
        <taxon>Thermotogales</taxon>
        <taxon>Thermotogaceae</taxon>
        <taxon>Thermotoga</taxon>
    </lineage>
</organism>
<accession>Q9WZ31</accession>
<protein>
    <recommendedName>
        <fullName evidence="13">Cobalt/magnesium transport protein CorA</fullName>
    </recommendedName>
</protein>
<evidence type="ECO:0000255" key="1"/>
<evidence type="ECO:0000269" key="2">
    <source>
    </source>
</evidence>
<evidence type="ECO:0000269" key="3">
    <source>
    </source>
</evidence>
<evidence type="ECO:0000269" key="4">
    <source>
    </source>
</evidence>
<evidence type="ECO:0000269" key="5">
    <source>
    </source>
</evidence>
<evidence type="ECO:0000269" key="6">
    <source>
    </source>
</evidence>
<evidence type="ECO:0000269" key="7">
    <source>
    </source>
</evidence>
<evidence type="ECO:0000269" key="8">
    <source>
    </source>
</evidence>
<evidence type="ECO:0000269" key="9">
    <source>
    </source>
</evidence>
<evidence type="ECO:0000269" key="10">
    <source>
    </source>
</evidence>
<evidence type="ECO:0000269" key="11">
    <source>
    </source>
</evidence>
<evidence type="ECO:0000269" key="12">
    <source>
    </source>
</evidence>
<evidence type="ECO:0000305" key="13"/>
<evidence type="ECO:0000305" key="14">
    <source>
    </source>
</evidence>
<evidence type="ECO:0000305" key="15">
    <source>
    </source>
</evidence>
<evidence type="ECO:0000305" key="16">
    <source>
    </source>
</evidence>
<evidence type="ECO:0000305" key="17">
    <source>
    </source>
</evidence>
<evidence type="ECO:0000305" key="18">
    <source>
    </source>
</evidence>
<evidence type="ECO:0000305" key="19">
    <source>
    </source>
</evidence>
<evidence type="ECO:0000305" key="20">
    <source>
    </source>
</evidence>
<evidence type="ECO:0000305" key="21">
    <source>
    </source>
</evidence>
<evidence type="ECO:0000305" key="22">
    <source>
    </source>
</evidence>
<evidence type="ECO:0000305" key="23">
    <source>
    </source>
</evidence>
<evidence type="ECO:0007744" key="24">
    <source>
        <dbReference type="PDB" id="2HN2"/>
    </source>
</evidence>
<evidence type="ECO:0007744" key="25">
    <source>
        <dbReference type="PDB" id="4EEB"/>
    </source>
</evidence>
<evidence type="ECO:0007744" key="26">
    <source>
        <dbReference type="PDB" id="4EED"/>
    </source>
</evidence>
<evidence type="ECO:0007744" key="27">
    <source>
        <dbReference type="PDB" id="4I0U"/>
    </source>
</evidence>
<evidence type="ECO:0007829" key="28">
    <source>
        <dbReference type="PDB" id="2BBH"/>
    </source>
</evidence>
<evidence type="ECO:0007829" key="29">
    <source>
        <dbReference type="PDB" id="4I0U"/>
    </source>
</evidence>
<evidence type="ECO:0007829" key="30">
    <source>
        <dbReference type="PDB" id="8SLB"/>
    </source>
</evidence>
<comment type="function">
    <text evidence="5 6 7 8 9 10 11 23">Mediates influx of magnesium ions (PubMed:18276588, PubMed:22722933, PubMed:23112165, PubMed:23781956). Mediates Co(2+) uptake (PubMed:21454699, PubMed:23091000, PubMed:23425532). Has high selectivity for Co(2+) (PubMed:21454699, PubMed:23425532). Alternates between open and closed states. Activated by low cytoplasmic Mg(2+) levels. Inactive when cytoplasmic Mg(2+) levels are high (PubMed:23112165, PubMed:23425532, PubMed:26871634).</text>
</comment>
<comment type="catalytic activity">
    <reaction evidence="5 7 9">
        <text>Mg(2+)(in) = Mg(2+)(out)</text>
        <dbReference type="Rhea" id="RHEA:29827"/>
        <dbReference type="ChEBI" id="CHEBI:18420"/>
    </reaction>
</comment>
<comment type="catalytic activity">
    <reaction evidence="6 8 10">
        <text>Co(2+)(in) = Co(2+)(out)</text>
        <dbReference type="Rhea" id="RHEA:28578"/>
        <dbReference type="ChEBI" id="CHEBI:48828"/>
    </reaction>
</comment>
<comment type="activity regulation">
    <text evidence="5">Inhibited by cobalt hexaammine.</text>
</comment>
<comment type="subunit">
    <text evidence="2 3 4 7 9 10 11 12">Homopentamer (PubMed:16598263, PubMed:16857941, PubMed:16902408, PubMed:22722933, PubMed:23112165, PubMed:23425532, PubMed:23781956, PubMed:26871634). In the absence of Mg(2+), interactions between subunits are weakened, and dimers, trimers and tetramers can be observed in vitro (PubMed:22722933, PubMed:26871634).</text>
</comment>
<comment type="interaction">
    <interactant intactId="EBI-15578365">
        <id>Q9WZ31</id>
    </interactant>
    <interactant intactId="EBI-15578365">
        <id>Q9WZ31</id>
        <label>corA</label>
    </interactant>
    <organismsDiffer>false</organismsDiffer>
    <experiments>19</experiments>
</comment>
<comment type="subcellular location">
    <subcellularLocation>
        <location evidence="9 14 15 16 17 18 19 20 21 22 23">Cell inner membrane</location>
        <topology evidence="2 3 4 9 10 12 20">Multi-pass membrane protein</topology>
    </subcellularLocation>
</comment>
<comment type="domain">
    <text evidence="2 3 4 6 9 10 12 20">The central ion permeation pathway is formed by the first transmembrane domain from each of the five subunits. Mg(2+) binding strengthens interactions between subunits and leads to the formation of a symmetrical homopentamer surrounding a closed ion permeation pathway (PubMed:16598263, PubMed:16857941, PubMed:16902408, PubMed:23091000, PubMed:23112165, PubMed:23425532, PubMed:26871634). Co(2+) binding also induces a conformation change (PubMed:21454699). Low Mg(2+) concentrations trigger both a conformation change within each subunit and a loosening of the interactions between subunits. This results in an open ion conduction pathway. In addition, this results in a less symmetrical shape of the whole complex (PubMed:23112165, PubMed:26871634).</text>
</comment>
<comment type="similarity">
    <text evidence="13">Belongs to the CorA metal ion transporter (MIT) (TC 1.A.35) family.</text>
</comment>
<name>CORA_THEMA</name>
<feature type="chain" id="PRO_0000239049" description="Cobalt/magnesium transport protein CorA">
    <location>
        <begin position="1"/>
        <end position="351"/>
    </location>
</feature>
<feature type="topological domain" description="Cytoplasmic" evidence="13">
    <location>
        <begin position="1"/>
        <end position="292"/>
    </location>
</feature>
<feature type="transmembrane region" description="Helical" evidence="2 3 4 9 10 12">
    <location>
        <begin position="293"/>
        <end position="313"/>
    </location>
</feature>
<feature type="topological domain" description="Extracellular" evidence="13">
    <location>
        <begin position="314"/>
        <end position="324"/>
    </location>
</feature>
<feature type="transmembrane region" description="Helical" evidence="2 3 4 9 10 12">
    <location>
        <begin position="325"/>
        <end position="345"/>
    </location>
</feature>
<feature type="topological domain" description="Cytoplasmic" evidence="13">
    <location>
        <begin position="346"/>
        <end position="351"/>
    </location>
</feature>
<feature type="coiled-coil region" evidence="1">
    <location>
        <begin position="178"/>
        <end position="225"/>
    </location>
</feature>
<feature type="short sequence motif" description="Probable selectivity filter" evidence="14 15 16 22">
    <location>
        <begin position="312"/>
        <end position="314"/>
    </location>
</feature>
<feature type="site" description="Essential for ion permeation" evidence="8">
    <location>
        <position position="288"/>
    </location>
</feature>
<feature type="site" description="Important for closing the ion permeation pathway in the closed state" evidence="2 3 4 5">
    <location>
        <position position="294"/>
    </location>
</feature>
<feature type="site" description="Threonine that confers selectivity for Co(2+) transport" evidence="10">
    <location>
        <position position="295"/>
    </location>
</feature>
<feature type="mutagenesis site" description="Decreases ion transport." evidence="5 10">
    <original>D</original>
    <variation>F</variation>
    <variation>K</variation>
    <location>
        <position position="89"/>
    </location>
</feature>
<feature type="mutagenesis site" description="Increases protein stability. Decreases ion transport." evidence="4 5">
    <original>D</original>
    <variation>K</variation>
    <location>
        <position position="253"/>
    </location>
</feature>
<feature type="mutagenesis site" description="Decreases ion transport." evidence="5">
    <original>L</original>
    <variation>A</variation>
    <location>
        <position position="280"/>
    </location>
</feature>
<feature type="mutagenesis site" description="Abolishes Co(2+) uptake." evidence="8 10">
    <original>N</original>
    <variation>L</variation>
    <location>
        <position position="288"/>
    </location>
</feature>
<feature type="mutagenesis site" description="No effect on ion transport." evidence="5">
    <original>M</original>
    <variation>A</variation>
    <location>
        <position position="291"/>
    </location>
</feature>
<feature type="mutagenesis site" description="Increases ion transport by suppression of an obstruction in the transmembrane ion permeation pathway." evidence="5">
    <original>L</original>
    <variation>A</variation>
    <variation>V</variation>
    <location>
        <position position="294"/>
    </location>
</feature>
<feature type="mutagenesis site" description="Strongly reduces Co(2+) uptake. Abolishes Co(2+) uptake; when associated with L-299." evidence="10">
    <original>T</original>
    <variation>L</variation>
    <location>
        <position position="295"/>
    </location>
</feature>
<feature type="mutagenesis site" description="Strongly reduces Co(2+) uptake." evidence="10">
    <original>T</original>
    <variation>M</variation>
    <location>
        <position position="295"/>
    </location>
</feature>
<feature type="mutagenesis site" description="No significant decrease of Co(2+) uptake, but abolishes selectivity for Co(2+)." evidence="10">
    <original>T</original>
    <variation>S</variation>
    <location>
        <position position="295"/>
    </location>
</feature>
<feature type="mutagenesis site" description="Reduces Co(2+) uptake. Abolishes Co(2+) uptake; when associated with L-295." evidence="10">
    <original>T</original>
    <variation>L</variation>
    <location>
        <position position="299"/>
    </location>
</feature>
<feature type="mutagenesis site" description="No effect on Co(2+) uptake." evidence="10">
    <original>T</original>
    <variation>M</variation>
    <location>
        <position position="299"/>
    </location>
</feature>
<feature type="mutagenesis site" description="Abolishes Co(2+) uptake." evidence="10">
    <original>T</original>
    <variation>S</variation>
    <location>
        <position position="299"/>
    </location>
</feature>
<feature type="mutagenesis site" description="Increases ion transport by suppression of a kink in the transmembrane ion permeation pathway." evidence="5">
    <original>P</original>
    <variation>A</variation>
    <variation>G</variation>
    <variation>I</variation>
    <location>
        <position position="303"/>
    </location>
</feature>
<feature type="mutagenesis site" description="Abolishes Co(2+) uptake." evidence="10">
    <original>T</original>
    <variation>L</variation>
    <location>
        <position position="305"/>
    </location>
</feature>
<feature type="mutagenesis site" description="Increases ion transport." evidence="7">
    <original>I</original>
    <variation>A</variation>
    <location>
        <position position="310"/>
    </location>
</feature>
<feature type="mutagenesis site" description="Abolishes pentamerization. Abolishes ion transport." evidence="7 11">
    <original>Y</original>
    <variation>A</variation>
    <location>
        <position position="311"/>
    </location>
</feature>
<feature type="mutagenesis site" description="No effect on pentamerization. No effect on ion transport." evidence="11">
    <original>Y</original>
    <variation>F</variation>
    <location>
        <position position="311"/>
    </location>
</feature>
<feature type="mutagenesis site" description="No effect on pentamerization. Abolishes ion transport." evidence="5 7">
    <original>G</original>
    <variation>A</variation>
    <location>
        <position position="312"/>
    </location>
</feature>
<feature type="mutagenesis site" description="No effect on pentamerization. Abolishes ion transport." evidence="11">
    <original>G</original>
    <variation>F</variation>
    <location>
        <position position="312"/>
    </location>
</feature>
<feature type="mutagenesis site" description="Abolishes pentamerization. Abolishes ion transport." evidence="5 7">
    <original>M</original>
    <variation>A</variation>
    <location>
        <position position="313"/>
    </location>
</feature>
<feature type="mutagenesis site" description="Abolishes pentamerization. Abolishes ion transport." evidence="11">
    <original>M</original>
    <variation>C</variation>
    <variation>I</variation>
    <variation>L</variation>
    <variation>V</variation>
    <location>
        <position position="313"/>
    </location>
</feature>
<feature type="mutagenesis site" description="Abolishes pentamerization. Abolishes ion transport." evidence="5">
    <original>N</original>
    <variation>A</variation>
    <location>
        <position position="314"/>
    </location>
</feature>
<feature type="mutagenesis site" description="Abolishes pentamerization. Abolishes ion transport." evidence="11">
    <original>N</original>
    <variation>D</variation>
    <variation>E</variation>
    <variation>T</variation>
    <location>
        <position position="314"/>
    </location>
</feature>
<feature type="mutagenesis site" description="No effect on pentamerization. Abolishes ion transport." evidence="11">
    <original>N</original>
    <variation>Q</variation>
    <location>
        <position position="314"/>
    </location>
</feature>
<feature type="mutagenesis site" description="Abolishes pentamerization. Abolishes ion transport." evidence="7 11">
    <original>F</original>
    <variation>A</variation>
    <location>
        <position position="315"/>
    </location>
</feature>
<feature type="mutagenesis site" description="No effect on pentamerization. Increases ion transport." evidence="11">
    <original>F</original>
    <variation>W</variation>
    <location>
        <position position="315"/>
    </location>
</feature>
<feature type="mutagenesis site" description="Impairs pentamerization. Decreases ion transport." evidence="7">
    <original>M</original>
    <variation>A</variation>
    <location>
        <position position="318"/>
    </location>
</feature>
<feature type="mutagenesis site" description="No effect on pentamerization. Decreases ion transport." evidence="11">
    <original>M</original>
    <variation>I</variation>
    <variation>L</variation>
    <variation>V</variation>
    <location>
        <position position="318"/>
    </location>
</feature>
<feature type="mutagenesis site" description="Impairs pentamerization. Decreases ion transport." evidence="7">
    <original>L</original>
    <variation>A</variation>
    <location>
        <position position="321"/>
    </location>
</feature>
<feature type="mutagenesis site" description="No effect on pentamerization. Decreases ion transport." evidence="11">
    <original>L</original>
    <variation>I</variation>
    <location>
        <position position="321"/>
    </location>
</feature>
<feature type="mutagenesis site" description="No effect on pentamerization. No effect on ion transport." evidence="11">
    <original>L</original>
    <variation>V</variation>
    <location>
        <position position="321"/>
    </location>
</feature>
<feature type="mutagenesis site" description="Abolishes pentamerization. Strongly decreases ion transport." evidence="7 11">
    <original>Y</original>
    <variation>A</variation>
    <location>
        <position position="327"/>
    </location>
</feature>
<feature type="mutagenesis site" description="No effect on pentamerization. Increases ion transport." evidence="11">
    <original>Y</original>
    <variation>F</variation>
    <location>
        <position position="327"/>
    </location>
</feature>
<feature type="mutagenesis site" description="Abolishes pentamerization. Mildly decreases ion transport." evidence="11">
    <original>Y</original>
    <variation>W</variation>
    <location>
        <position position="327"/>
    </location>
</feature>
<feature type="strand" evidence="29">
    <location>
        <begin position="5"/>
        <end position="7"/>
    </location>
</feature>
<feature type="strand" evidence="28">
    <location>
        <begin position="28"/>
        <end position="35"/>
    </location>
</feature>
<feature type="strand" evidence="28">
    <location>
        <begin position="38"/>
        <end position="45"/>
    </location>
</feature>
<feature type="helix" evidence="28">
    <location>
        <begin position="47"/>
        <end position="49"/>
    </location>
</feature>
<feature type="helix" evidence="28">
    <location>
        <begin position="51"/>
        <end position="55"/>
    </location>
</feature>
<feature type="strand" evidence="28">
    <location>
        <begin position="60"/>
        <end position="65"/>
    </location>
</feature>
<feature type="helix" evidence="28">
    <location>
        <begin position="70"/>
        <end position="80"/>
    </location>
</feature>
<feature type="helix" evidence="28">
    <location>
        <begin position="84"/>
        <end position="91"/>
    </location>
</feature>
<feature type="strand" evidence="28">
    <location>
        <begin position="98"/>
        <end position="101"/>
    </location>
</feature>
<feature type="strand" evidence="28">
    <location>
        <begin position="103"/>
        <end position="114"/>
    </location>
</feature>
<feature type="turn" evidence="29">
    <location>
        <begin position="117"/>
        <end position="120"/>
    </location>
</feature>
<feature type="strand" evidence="28">
    <location>
        <begin position="123"/>
        <end position="132"/>
    </location>
</feature>
<feature type="strand" evidence="28">
    <location>
        <begin position="135"/>
        <end position="143"/>
    </location>
</feature>
<feature type="helix" evidence="28">
    <location>
        <begin position="148"/>
        <end position="155"/>
    </location>
</feature>
<feature type="helix" evidence="28">
    <location>
        <begin position="161"/>
        <end position="163"/>
    </location>
</feature>
<feature type="helix" evidence="28">
    <location>
        <begin position="166"/>
        <end position="197"/>
    </location>
</feature>
<feature type="helix" evidence="28">
    <location>
        <begin position="208"/>
        <end position="242"/>
    </location>
</feature>
<feature type="helix" evidence="30">
    <location>
        <begin position="245"/>
        <end position="247"/>
    </location>
</feature>
<feature type="helix" evidence="30">
    <location>
        <begin position="248"/>
        <end position="257"/>
    </location>
</feature>
<feature type="helix" evidence="29">
    <location>
        <begin position="275"/>
        <end position="310"/>
    </location>
</feature>
<feature type="strand" evidence="29">
    <location>
        <begin position="311"/>
        <end position="313"/>
    </location>
</feature>
<feature type="helix" evidence="29">
    <location>
        <begin position="319"/>
        <end position="322"/>
    </location>
</feature>
<feature type="helix" evidence="29">
    <location>
        <begin position="326"/>
        <end position="344"/>
    </location>
</feature>
<feature type="turn" evidence="29">
    <location>
        <begin position="345"/>
        <end position="348"/>
    </location>
</feature>
<sequence>MEEKRLSAKKGLPPGTLVYTGKYREDFEIEVMNYSIEEFREFKTTDVESVLPFRDSSTPTWINITGIHRTDVVQRVGEFFGIHPLVLEDILNVHQRPKVEFFENYVFIVLKMFTYDKNLHELESEQVSLILTKNCVLMFQEKIGDVFDPVRERIRYNRGIIRKKRADYLLYSLIDALVDDYFVLLEKIDDEIDVLEEEVLERPEKETVQRTHQLKRNLVELRKTIWPLREVLSSLYRDVPPLIEKETVPYFRDVYDHTIQIADTVETFRDIVSGLLDVYLSSVSNKTNEVMKVLTIIATIFMPLTFIAGIYGMNFEYMPELRWKWGYPVVLAVMGVIAVIMVVYFKKKKWL</sequence>
<dbReference type="EMBL" id="AE000512">
    <property type="protein sequence ID" value="AAD35646.1"/>
    <property type="molecule type" value="Genomic_DNA"/>
</dbReference>
<dbReference type="PIR" id="H72360">
    <property type="entry name" value="H72360"/>
</dbReference>
<dbReference type="RefSeq" id="NP_228371.1">
    <property type="nucleotide sequence ID" value="NC_000853.1"/>
</dbReference>
<dbReference type="RefSeq" id="WP_004081315.1">
    <property type="nucleotide sequence ID" value="NC_000853.1"/>
</dbReference>
<dbReference type="PDB" id="2BBH">
    <property type="method" value="X-ray"/>
    <property type="resolution" value="1.85 A"/>
    <property type="chains" value="A=1-266"/>
</dbReference>
<dbReference type="PDB" id="2BBJ">
    <property type="method" value="X-ray"/>
    <property type="resolution" value="3.90 A"/>
    <property type="chains" value="A/B/D/E/F=1-351"/>
</dbReference>
<dbReference type="PDB" id="2HN2">
    <property type="method" value="X-ray"/>
    <property type="resolution" value="3.70 A"/>
    <property type="chains" value="A/B/C/D/E=1-351"/>
</dbReference>
<dbReference type="PDB" id="2IUB">
    <property type="method" value="X-ray"/>
    <property type="resolution" value="2.90 A"/>
    <property type="chains" value="A/B/C/D/E/F/G/H/I/J=1-351"/>
</dbReference>
<dbReference type="PDB" id="3JCF">
    <property type="method" value="X-ray"/>
    <property type="resolution" value="3.80 A"/>
    <property type="chains" value="A/B/C/D/E=1-351"/>
</dbReference>
<dbReference type="PDB" id="3JCG">
    <property type="method" value="X-ray"/>
    <property type="resolution" value="7.06 A"/>
    <property type="chains" value="A/B/C/D/E=1-351"/>
</dbReference>
<dbReference type="PDB" id="3JCH">
    <property type="method" value="X-ray"/>
    <property type="resolution" value="7.06 A"/>
    <property type="chains" value="A/B/C/D/E=1-351"/>
</dbReference>
<dbReference type="PDB" id="4EEB">
    <property type="method" value="X-ray"/>
    <property type="resolution" value="3.80 A"/>
    <property type="chains" value="A/B/C/D/E=26-351"/>
</dbReference>
<dbReference type="PDB" id="4EED">
    <property type="method" value="X-ray"/>
    <property type="resolution" value="3.92 A"/>
    <property type="chains" value="A/B/C/D/E=26-351"/>
</dbReference>
<dbReference type="PDB" id="4I0U">
    <property type="method" value="X-ray"/>
    <property type="resolution" value="2.70 A"/>
    <property type="chains" value="A/B/C/D/E/F/G/H/I/J=1-351"/>
</dbReference>
<dbReference type="PDB" id="5JRW">
    <property type="method" value="X-ray"/>
    <property type="resolution" value="3.30 A"/>
    <property type="chains" value="A/B/C/D/E=2-351"/>
</dbReference>
<dbReference type="PDB" id="5JTG">
    <property type="method" value="X-ray"/>
    <property type="resolution" value="3.05 A"/>
    <property type="chains" value="A/B/C/D/E=2-351"/>
</dbReference>
<dbReference type="PDB" id="8SLB">
    <property type="method" value="X-ray"/>
    <property type="resolution" value="2.04 A"/>
    <property type="chains" value="A=1-266"/>
</dbReference>
<dbReference type="PDB" id="8TMB">
    <property type="method" value="EM"/>
    <property type="resolution" value="3.60 A"/>
    <property type="chains" value="A/B/C/D/E=1-351"/>
</dbReference>
<dbReference type="PDB" id="8TMC">
    <property type="method" value="EM"/>
    <property type="resolution" value="3.30 A"/>
    <property type="chains" value="A/B/C/D/E=1-351"/>
</dbReference>
<dbReference type="PDB" id="8TMD">
    <property type="method" value="EM"/>
    <property type="resolution" value="3.00 A"/>
    <property type="chains" value="A/B/C/D/E=1-351"/>
</dbReference>
<dbReference type="PDB" id="8TME">
    <property type="method" value="EM"/>
    <property type="resolution" value="3.10 A"/>
    <property type="chains" value="A/B/C/D/E=1-351"/>
</dbReference>
<dbReference type="PDB" id="8TMF">
    <property type="method" value="EM"/>
    <property type="resolution" value="3.40 A"/>
    <property type="chains" value="A/B/C/D/E=1-351"/>
</dbReference>
<dbReference type="PDB" id="8TMG">
    <property type="method" value="EM"/>
    <property type="resolution" value="3.00 A"/>
    <property type="chains" value="A/B/C/D/E=1-351"/>
</dbReference>
<dbReference type="PDB" id="8TMH">
    <property type="method" value="EM"/>
    <property type="resolution" value="3.10 A"/>
    <property type="chains" value="A/B/C/D/E=1-351"/>
</dbReference>
<dbReference type="PDB" id="8TMI">
    <property type="method" value="EM"/>
    <property type="resolution" value="3.30 A"/>
    <property type="chains" value="A/B/C/D/E=1-351"/>
</dbReference>
<dbReference type="PDB" id="8TMJ">
    <property type="method" value="EM"/>
    <property type="resolution" value="3.20 A"/>
    <property type="chains" value="A/B/C/D/E=1-351"/>
</dbReference>
<dbReference type="PDB" id="8TMK">
    <property type="method" value="EM"/>
    <property type="resolution" value="3.40 A"/>
    <property type="chains" value="A/B/C/D/E=1-351"/>
</dbReference>
<dbReference type="PDB" id="8TML">
    <property type="method" value="EM"/>
    <property type="resolution" value="3.40 A"/>
    <property type="chains" value="A/B/C/D/E=1-351"/>
</dbReference>
<dbReference type="PDB" id="8TMM">
    <property type="method" value="EM"/>
    <property type="resolution" value="3.40 A"/>
    <property type="chains" value="A/B/C/D/E=1-351"/>
</dbReference>
<dbReference type="PDB" id="8TMN">
    <property type="method" value="EM"/>
    <property type="resolution" value="3.30 A"/>
    <property type="chains" value="A/B/C/D/E=1-351"/>
</dbReference>
<dbReference type="PDB" id="8TMO">
    <property type="method" value="EM"/>
    <property type="resolution" value="3.10 A"/>
    <property type="chains" value="A/B/C/D/E=1-351"/>
</dbReference>
<dbReference type="PDB" id="8TMP">
    <property type="method" value="EM"/>
    <property type="resolution" value="3.20 A"/>
    <property type="chains" value="A/B/C/D/E=1-351"/>
</dbReference>
<dbReference type="PDB" id="8TMQ">
    <property type="method" value="EM"/>
    <property type="resolution" value="3.10 A"/>
    <property type="chains" value="A/B/C/D/E=1-351"/>
</dbReference>
<dbReference type="PDBsum" id="2BBH"/>
<dbReference type="PDBsum" id="2BBJ"/>
<dbReference type="PDBsum" id="2HN2"/>
<dbReference type="PDBsum" id="2IUB"/>
<dbReference type="PDBsum" id="3JCF"/>
<dbReference type="PDBsum" id="3JCG"/>
<dbReference type="PDBsum" id="3JCH"/>
<dbReference type="PDBsum" id="4EEB"/>
<dbReference type="PDBsum" id="4EED"/>
<dbReference type="PDBsum" id="4I0U"/>
<dbReference type="PDBsum" id="5JRW"/>
<dbReference type="PDBsum" id="5JTG"/>
<dbReference type="PDBsum" id="8SLB"/>
<dbReference type="PDBsum" id="8TMB"/>
<dbReference type="PDBsum" id="8TMC"/>
<dbReference type="PDBsum" id="8TMD"/>
<dbReference type="PDBsum" id="8TME"/>
<dbReference type="PDBsum" id="8TMF"/>
<dbReference type="PDBsum" id="8TMG"/>
<dbReference type="PDBsum" id="8TMH"/>
<dbReference type="PDBsum" id="8TMI"/>
<dbReference type="PDBsum" id="8TMJ"/>
<dbReference type="PDBsum" id="8TMK"/>
<dbReference type="PDBsum" id="8TML"/>
<dbReference type="PDBsum" id="8TMM"/>
<dbReference type="PDBsum" id="8TMN"/>
<dbReference type="PDBsum" id="8TMO"/>
<dbReference type="PDBsum" id="8TMP"/>
<dbReference type="PDBsum" id="8TMQ"/>
<dbReference type="EMDB" id="EMD-41383"/>
<dbReference type="EMDB" id="EMD-41384"/>
<dbReference type="EMDB" id="EMD-41385"/>
<dbReference type="EMDB" id="EMD-41386"/>
<dbReference type="EMDB" id="EMD-41387"/>
<dbReference type="EMDB" id="EMD-41388"/>
<dbReference type="EMDB" id="EMD-41389"/>
<dbReference type="EMDB" id="EMD-41390"/>
<dbReference type="EMDB" id="EMD-41391"/>
<dbReference type="EMDB" id="EMD-41392"/>
<dbReference type="EMDB" id="EMD-41393"/>
<dbReference type="EMDB" id="EMD-41394"/>
<dbReference type="EMDB" id="EMD-41395"/>
<dbReference type="EMDB" id="EMD-41396"/>
<dbReference type="EMDB" id="EMD-41397"/>
<dbReference type="EMDB" id="EMD-41398"/>
<dbReference type="EMDB" id="EMD-6551"/>
<dbReference type="EMDB" id="EMD-6552"/>
<dbReference type="EMDB" id="EMD-6553"/>
<dbReference type="SASBDB" id="Q9WZ31"/>
<dbReference type="SMR" id="Q9WZ31"/>
<dbReference type="DIP" id="DIP-59006N"/>
<dbReference type="FunCoup" id="Q9WZ31">
    <property type="interactions" value="200"/>
</dbReference>
<dbReference type="STRING" id="243274.TM_0561"/>
<dbReference type="TCDB" id="1.A.35.3.2">
    <property type="family name" value="the cora metal ion transporter (mit) family"/>
</dbReference>
<dbReference type="PaxDb" id="243274-THEMA_01870"/>
<dbReference type="EnsemblBacteria" id="AAD35646">
    <property type="protein sequence ID" value="AAD35646"/>
    <property type="gene ID" value="TM_0561"/>
</dbReference>
<dbReference type="KEGG" id="tma:TM0561"/>
<dbReference type="KEGG" id="tmi:THEMA_01870"/>
<dbReference type="KEGG" id="tmm:Tmari_0558"/>
<dbReference type="KEGG" id="tmw:THMA_0574"/>
<dbReference type="eggNOG" id="COG0598">
    <property type="taxonomic scope" value="Bacteria"/>
</dbReference>
<dbReference type="InParanoid" id="Q9WZ31"/>
<dbReference type="OrthoDB" id="9803416at2"/>
<dbReference type="BRENDA" id="7.2.2.14">
    <property type="organism ID" value="6331"/>
</dbReference>
<dbReference type="EvolutionaryTrace" id="Q9WZ31"/>
<dbReference type="Proteomes" id="UP000008183">
    <property type="component" value="Chromosome"/>
</dbReference>
<dbReference type="GO" id="GO:0005886">
    <property type="term" value="C:plasma membrane"/>
    <property type="evidence" value="ECO:0000314"/>
    <property type="project" value="UniProtKB"/>
</dbReference>
<dbReference type="GO" id="GO:0050897">
    <property type="term" value="F:cobalt ion binding"/>
    <property type="evidence" value="ECO:0000314"/>
    <property type="project" value="UniProtKB"/>
</dbReference>
<dbReference type="GO" id="GO:0015087">
    <property type="term" value="F:cobalt ion transmembrane transporter activity"/>
    <property type="evidence" value="ECO:0000315"/>
    <property type="project" value="UniProtKB"/>
</dbReference>
<dbReference type="GO" id="GO:0042802">
    <property type="term" value="F:identical protein binding"/>
    <property type="evidence" value="ECO:0000353"/>
    <property type="project" value="IntAct"/>
</dbReference>
<dbReference type="GO" id="GO:0000287">
    <property type="term" value="F:magnesium ion binding"/>
    <property type="evidence" value="ECO:0000314"/>
    <property type="project" value="UniProtKB"/>
</dbReference>
<dbReference type="GO" id="GO:0015095">
    <property type="term" value="F:magnesium ion transmembrane transporter activity"/>
    <property type="evidence" value="ECO:0000315"/>
    <property type="project" value="UniProtKB"/>
</dbReference>
<dbReference type="GO" id="GO:0006824">
    <property type="term" value="P:cobalt ion transport"/>
    <property type="evidence" value="ECO:0000315"/>
    <property type="project" value="UniProtKB"/>
</dbReference>
<dbReference type="GO" id="GO:1903830">
    <property type="term" value="P:magnesium ion transmembrane transport"/>
    <property type="evidence" value="ECO:0000315"/>
    <property type="project" value="UniProtKB"/>
</dbReference>
<dbReference type="GO" id="GO:0051260">
    <property type="term" value="P:protein homooligomerization"/>
    <property type="evidence" value="ECO:0000314"/>
    <property type="project" value="UniProtKB"/>
</dbReference>
<dbReference type="CDD" id="cd12828">
    <property type="entry name" value="TmCorA-like_1"/>
    <property type="match status" value="1"/>
</dbReference>
<dbReference type="FunFam" id="3.30.460.20:FF:000008">
    <property type="entry name" value="Cobalt/magnesium transport protein CorA"/>
    <property type="match status" value="1"/>
</dbReference>
<dbReference type="FunFam" id="1.20.58.340:FF:000012">
    <property type="entry name" value="Magnesium transport protein CorA"/>
    <property type="match status" value="1"/>
</dbReference>
<dbReference type="Gene3D" id="3.30.460.20">
    <property type="entry name" value="CorA soluble domain-like"/>
    <property type="match status" value="1"/>
</dbReference>
<dbReference type="Gene3D" id="1.20.58.340">
    <property type="entry name" value="Magnesium transport protein CorA, transmembrane region"/>
    <property type="match status" value="2"/>
</dbReference>
<dbReference type="InterPro" id="IPR045861">
    <property type="entry name" value="CorA_cytoplasmic_dom"/>
</dbReference>
<dbReference type="InterPro" id="IPR045863">
    <property type="entry name" value="CorA_TM1_TM2"/>
</dbReference>
<dbReference type="InterPro" id="IPR004488">
    <property type="entry name" value="Mg/Co-transport_prot_CorA"/>
</dbReference>
<dbReference type="InterPro" id="IPR002523">
    <property type="entry name" value="MgTranspt_CorA/ZnTranspt_ZntB"/>
</dbReference>
<dbReference type="NCBIfam" id="TIGR00383">
    <property type="entry name" value="corA"/>
    <property type="match status" value="1"/>
</dbReference>
<dbReference type="PANTHER" id="PTHR46494">
    <property type="entry name" value="CORA FAMILY METAL ION TRANSPORTER (EUROFUNG)"/>
    <property type="match status" value="1"/>
</dbReference>
<dbReference type="PANTHER" id="PTHR46494:SF1">
    <property type="entry name" value="CORA FAMILY METAL ION TRANSPORTER (EUROFUNG)"/>
    <property type="match status" value="1"/>
</dbReference>
<dbReference type="Pfam" id="PF01544">
    <property type="entry name" value="CorA"/>
    <property type="match status" value="1"/>
</dbReference>
<dbReference type="SUPFAM" id="SSF143865">
    <property type="entry name" value="CorA soluble domain-like"/>
    <property type="match status" value="1"/>
</dbReference>
<dbReference type="SUPFAM" id="SSF144083">
    <property type="entry name" value="Magnesium transport protein CorA, transmembrane region"/>
    <property type="match status" value="1"/>
</dbReference>
<proteinExistence type="evidence at protein level"/>
<gene>
    <name type="primary">corA</name>
    <name type="ordered locus">TM_0561</name>
</gene>
<reference key="1">
    <citation type="journal article" date="1999" name="Nature">
        <title>Evidence for lateral gene transfer between Archaea and Bacteria from genome sequence of Thermotoga maritima.</title>
        <authorList>
            <person name="Nelson K.E."/>
            <person name="Clayton R.A."/>
            <person name="Gill S.R."/>
            <person name="Gwinn M.L."/>
            <person name="Dodson R.J."/>
            <person name="Haft D.H."/>
            <person name="Hickey E.K."/>
            <person name="Peterson J.D."/>
            <person name="Nelson W.C."/>
            <person name="Ketchum K.A."/>
            <person name="McDonald L.A."/>
            <person name="Utterback T.R."/>
            <person name="Malek J.A."/>
            <person name="Linher K.D."/>
            <person name="Garrett M.M."/>
            <person name="Stewart A.M."/>
            <person name="Cotton M.D."/>
            <person name="Pratt M.S."/>
            <person name="Phillips C.A."/>
            <person name="Richardson D.L."/>
            <person name="Heidelberg J.F."/>
            <person name="Sutton G.G."/>
            <person name="Fleischmann R.D."/>
            <person name="Eisen J.A."/>
            <person name="White O."/>
            <person name="Salzberg S.L."/>
            <person name="Smith H.O."/>
            <person name="Venter J.C."/>
            <person name="Fraser C.M."/>
        </authorList>
    </citation>
    <scope>NUCLEOTIDE SEQUENCE [LARGE SCALE GENOMIC DNA]</scope>
    <source>
        <strain>ATCC 43589 / DSM 3109 / JCM 10099 / NBRC 100826 / MSB8</strain>
    </source>
</reference>
<reference key="2">
    <citation type="journal article" date="2008" name="J. Biol. Chem.">
        <title>Probing structure-function relationships and gating mechanisms in the CorA Mg2+ transport system.</title>
        <authorList>
            <person name="Payandeh J."/>
            <person name="Li C."/>
            <person name="Ramjeesingh M."/>
            <person name="Poduch E."/>
            <person name="Bear C.E."/>
            <person name="Pai E.F."/>
        </authorList>
    </citation>
    <scope>FUNCTION</scope>
    <scope>CATALYTIC ACTIVITY</scope>
    <scope>ACTIVITY REGULATION</scope>
    <scope>SUBCELLULAR LOCATION</scope>
    <scope>MUTAGENESIS OF ASP-89; ASP-253; LEU-280; MET-291; LEU-294; PRO-303; GLY-312; MET-313 AND ASN-314</scope>
</reference>
<reference key="3">
    <citation type="journal article" date="2011" name="J. Biol. Chem.">
        <title>Co2+ selectivity of Thermotoga maritima CorA and its inability to regulate Mg2+ homeostasis present a new class of CorA proteins.</title>
        <authorList>
            <person name="Xia Y."/>
            <person name="Lundbaeck A.K."/>
            <person name="Sahaf N."/>
            <person name="Nordlund G."/>
            <person name="Brzezinski P."/>
            <person name="Eshaghi S."/>
        </authorList>
    </citation>
    <scope>FUNCTION IN COBALT TRANSPORT</scope>
    <scope>CATALYTIC ACTIVITY</scope>
    <scope>SUBCELLULAR LOCATION</scope>
    <scope>DOMAIN</scope>
</reference>
<reference key="4">
    <citation type="journal article" date="2012" name="J. Biol. Chem.">
        <title>The periplasmic loop provides stability to the open state of the CorA magnesium channel.</title>
        <authorList>
            <person name="Palombo I."/>
            <person name="Daley D.O."/>
            <person name="Rapp M."/>
        </authorList>
    </citation>
    <scope>FUNCTION</scope>
    <scope>CATALYTIC ACTIVITY</scope>
    <scope>SUBCELLULAR LOCATION</scope>
    <scope>SUBUNIT</scope>
    <scope>MUTAGENESIS OF ILE-310; TYR-311; GLY-312; MET-313; ASN-314; PHE-315; MET-318; LEU-321 AND TYR-327</scope>
</reference>
<reference key="5">
    <citation type="journal article" date="2012" name="Proc. Natl. Acad. Sci. U.S.A.">
        <title>Structural insights into the mechanisms of Mg2+ uptake, transport, and gating by CorA.</title>
        <authorList>
            <person name="Guskov A."/>
            <person name="Nordin N."/>
            <person name="Reynaud A."/>
            <person name="Engman H."/>
            <person name="Lundback A.K."/>
            <person name="Jong A.J."/>
            <person name="Cornvik T."/>
            <person name="Phua T."/>
            <person name="Eshaghi S."/>
        </authorList>
    </citation>
    <scope>FUNCTION</scope>
    <scope>CATALYTIC ACTIVITY</scope>
    <scope>MUTAGENESIS OF ASN-288</scope>
    <scope>SUBCELLULAR LOCATION</scope>
</reference>
<reference key="6">
    <citation type="journal article" date="2013" name="Biochemistry">
        <title>Why is the GMN motif conserved in the CorA/Mrs2/Alr1 superfamily of magnesium transport proteins?</title>
        <authorList>
            <person name="Palombo I."/>
            <person name="Daley D.O."/>
            <person name="Rapp M."/>
        </authorList>
    </citation>
    <scope>FUNCTION</scope>
    <scope>SUBCELLULAR LOCATION</scope>
    <scope>SUBUNIT</scope>
    <scope>MUTAGENESIS OF TYR-311; GLY-312; MET-313; ASN-314; PHE-315; MET-318; LEU-321 AND TYR-327</scope>
</reference>
<reference evidence="24" key="7">
    <citation type="journal article" date="2006" name="EMBO J.">
        <title>A structural basis for Mg2+ homeostasis and the CorA translocation cycle.</title>
        <authorList>
            <person name="Payandeh J."/>
            <person name="Pai E.F."/>
        </authorList>
    </citation>
    <scope>X-RAY CRYSTALLOGRAPHY (3.70 ANGSTROMS)</scope>
    <scope>SUBUNIT</scope>
    <scope>SUBCELLULAR LOCATION</scope>
    <scope>TOPOLOGY</scope>
    <scope>MOTIF</scope>
    <scope>DOMAIN</scope>
    <scope>MUTAGENESIS OF ASP-253</scope>
</reference>
<reference key="8">
    <citation type="journal article" date="2006" name="Nature">
        <title>Crystal structure of the CorA Mg2+ transporter.</title>
        <authorList>
            <person name="Lunin V.V."/>
            <person name="Dobrovetsky E."/>
            <person name="Khutoreskaya G."/>
            <person name="Zhang R."/>
            <person name="Joachimiak A."/>
            <person name="Doyle D.A."/>
            <person name="Bochkarev A."/>
            <person name="Maguire M.E."/>
            <person name="Edwards A.M."/>
            <person name="Koth C.M."/>
        </authorList>
    </citation>
    <scope>X-RAY CRYSTALLOGRAPHY (1.85 ANGSTROMS)</scope>
    <scope>SUBCELLULAR LOCATION</scope>
    <scope>SUBUNIT</scope>
    <scope>TOPOLOGY</scope>
    <scope>DOMAIN</scope>
    <scope>MOTIF</scope>
</reference>
<reference key="9">
    <citation type="journal article" date="2006" name="Science">
        <title>Crystal structure of a divalent metal ion transporter CorA at 2.9 Angstrom resolution.</title>
        <authorList>
            <person name="Eshaghi S."/>
            <person name="Niegowski D."/>
            <person name="Kohl A."/>
            <person name="Molina D.M."/>
            <person name="Lesley S.A."/>
            <person name="Nordlund P."/>
        </authorList>
    </citation>
    <scope>X-RAY CRYSTALLOGRAPHY (2.9 ANGSTROMS)</scope>
    <scope>SUBCELLULAR LOCATION</scope>
    <scope>SUBUNIT</scope>
    <scope>TOPOLOGY</scope>
    <scope>DOMAIN</scope>
    <scope>MOTIF</scope>
</reference>
<reference evidence="25 26" key="10">
    <citation type="journal article" date="2012" name="Proc. Natl. Acad. Sci. U.S.A.">
        <title>Structural asymmetry in the magnesium channel CorA points to sequential allosteric regulation.</title>
        <authorList>
            <person name="Pfoh R."/>
            <person name="Li A."/>
            <person name="Chakrabarti N."/>
            <person name="Payandeh J."/>
            <person name="Pomes R."/>
            <person name="Pai E.F."/>
        </authorList>
    </citation>
    <scope>X-RAY CRYSTALLOGRAPHY (3.80 ANGSTROMS) OF 26-351 OF APOPROTEIN AND IN COMPLEX WITH MAGNESIUM</scope>
    <scope>FUNCTION</scope>
    <scope>CATALYTIC ACTIVITY</scope>
    <scope>SUBUNIT</scope>
    <scope>SUBCELLULAR LOCATION</scope>
    <scope>TOPOLOGY</scope>
    <scope>DOMAIN</scope>
</reference>
<reference evidence="27" key="11">
    <citation type="journal article" date="2013" name="Biochem. J.">
        <title>Exploring the structure and function of Thermotoga maritima CorA reveals the mechanism of gating and ion selectivity in Co2+/Mg2+ transport.</title>
        <authorList>
            <person name="Nordin N."/>
            <person name="Guskov A."/>
            <person name="Phua T."/>
            <person name="Sahaf N."/>
            <person name="Xia Y."/>
            <person name="Lu S."/>
            <person name="Eshaghi H."/>
            <person name="Eshaghi S."/>
        </authorList>
    </citation>
    <scope>X-RAY CRYSTALLOGRAPHY (2.70 ANGSTROMS)</scope>
    <scope>FUNCTION</scope>
    <scope>CATALYTIC ACTIVITY</scope>
    <scope>SUBUNIT</scope>
    <scope>SUBCELLULAR LOCATION</scope>
    <scope>TOPOLOGY</scope>
    <scope>DOMAIN</scope>
    <scope>MUTAGENESIS OF ASP-89; ASN-288; THR-295; THR-299 AND THR-305</scope>
</reference>
<reference key="12">
    <citation type="journal article" date="2016" name="Cell">
        <title>Cryo-EM Structures of the magnesium channel CorA reveal symmetry break upon gating.</title>
        <authorList>
            <person name="Matthies D."/>
            <person name="Dalmas O."/>
            <person name="Borgnia M.J."/>
            <person name="Dominik P.K."/>
            <person name="Merk A."/>
            <person name="Rao P."/>
            <person name="Reddy B.G."/>
            <person name="Islam S."/>
            <person name="Bartesaghi A."/>
            <person name="Perozo E."/>
            <person name="Subramaniam S."/>
        </authorList>
    </citation>
    <scope>STRUCTURE BY ELECTRON MICROSCOPY (3.80 ANGSTROMS) OF APOPROTEIN AND IN COMPLEX WITH MAGNESIUM</scope>
    <scope>FUNCTION</scope>
    <scope>SUBCELLULAR LOCATION</scope>
    <scope>SUBUNIT</scope>
    <scope>DOMAIN</scope>
</reference>
<keyword id="KW-0002">3D-structure</keyword>
<keyword id="KW-0997">Cell inner membrane</keyword>
<keyword id="KW-1003">Cell membrane</keyword>
<keyword id="KW-0170">Cobalt</keyword>
<keyword id="KW-0175">Coiled coil</keyword>
<keyword id="KW-0406">Ion transport</keyword>
<keyword id="KW-0460">Magnesium</keyword>
<keyword id="KW-0472">Membrane</keyword>
<keyword id="KW-0479">Metal-binding</keyword>
<keyword id="KW-1185">Reference proteome</keyword>
<keyword id="KW-0812">Transmembrane</keyword>
<keyword id="KW-1133">Transmembrane helix</keyword>
<keyword id="KW-0813">Transport</keyword>